<evidence type="ECO:0000255" key="1">
    <source>
        <dbReference type="HAMAP-Rule" id="MF_01416"/>
    </source>
</evidence>
<sequence length="178" mass="20443">MDKKQYAIIEKYALPFVQTVFEKGQQEDVFEKLSQIKAVFAETGLADFLSHIGISDHEKEKSLRLFQNSGSQLLDNLIEIVILNHREDLFYEIVLESQHQLEKISNEFEVTLRSVQPLTASQKEKIRPIIEQKMGLKVRSLKEELDSSLIGGFVISANNKTIDASIKRQLQVIKEKLK</sequence>
<proteinExistence type="inferred from homology"/>
<keyword id="KW-0066">ATP synthesis</keyword>
<keyword id="KW-1003">Cell membrane</keyword>
<keyword id="KW-0139">CF(1)</keyword>
<keyword id="KW-0375">Hydrogen ion transport</keyword>
<keyword id="KW-0406">Ion transport</keyword>
<keyword id="KW-0472">Membrane</keyword>
<keyword id="KW-1185">Reference proteome</keyword>
<keyword id="KW-0813">Transport</keyword>
<comment type="function">
    <text evidence="1">F(1)F(0) ATP synthase produces ATP from ADP in the presence of a proton or sodium gradient. F-type ATPases consist of two structural domains, F(1) containing the extramembraneous catalytic core and F(0) containing the membrane proton channel, linked together by a central stalk and a peripheral stalk. During catalysis, ATP synthesis in the catalytic domain of F(1) is coupled via a rotary mechanism of the central stalk subunits to proton translocation.</text>
</comment>
<comment type="function">
    <text evidence="1">This protein is part of the stalk that links CF(0) to CF(1). It either transmits conformational changes from CF(0) to CF(1) or is implicated in proton conduction.</text>
</comment>
<comment type="subunit">
    <text evidence="1">F-type ATPases have 2 components, F(1) - the catalytic core - and F(0) - the membrane proton channel. F(1) has five subunits: alpha(3), beta(3), gamma(1), delta(1), epsilon(1). F(0) has three main subunits: a(1), b(2) and c(10-14). The alpha and beta chains form an alternating ring which encloses part of the gamma chain. F(1) is attached to F(0) by a central stalk formed by the gamma and epsilon chains, while a peripheral stalk is formed by the delta and b chains.</text>
</comment>
<comment type="subcellular location">
    <subcellularLocation>
        <location evidence="1">Cell membrane</location>
        <topology evidence="1">Peripheral membrane protein</topology>
    </subcellularLocation>
</comment>
<comment type="similarity">
    <text evidence="1">Belongs to the ATPase delta chain family.</text>
</comment>
<accession>A3CM11</accession>
<dbReference type="EMBL" id="CP000387">
    <property type="protein sequence ID" value="ABN44216.1"/>
    <property type="molecule type" value="Genomic_DNA"/>
</dbReference>
<dbReference type="RefSeq" id="WP_011836717.1">
    <property type="nucleotide sequence ID" value="NC_009009.1"/>
</dbReference>
<dbReference type="RefSeq" id="YP_001034766.1">
    <property type="nucleotide sequence ID" value="NC_009009.1"/>
</dbReference>
<dbReference type="SMR" id="A3CM11"/>
<dbReference type="STRING" id="388919.SSA_0785"/>
<dbReference type="KEGG" id="ssa:SSA_0785"/>
<dbReference type="PATRIC" id="fig|388919.9.peg.751"/>
<dbReference type="eggNOG" id="COG0712">
    <property type="taxonomic scope" value="Bacteria"/>
</dbReference>
<dbReference type="HOGENOM" id="CLU_085114_1_2_9"/>
<dbReference type="OrthoDB" id="9802471at2"/>
<dbReference type="Proteomes" id="UP000002148">
    <property type="component" value="Chromosome"/>
</dbReference>
<dbReference type="GO" id="GO:0005886">
    <property type="term" value="C:plasma membrane"/>
    <property type="evidence" value="ECO:0007669"/>
    <property type="project" value="UniProtKB-SubCell"/>
</dbReference>
<dbReference type="GO" id="GO:0045259">
    <property type="term" value="C:proton-transporting ATP synthase complex"/>
    <property type="evidence" value="ECO:0007669"/>
    <property type="project" value="UniProtKB-KW"/>
</dbReference>
<dbReference type="GO" id="GO:0046933">
    <property type="term" value="F:proton-transporting ATP synthase activity, rotational mechanism"/>
    <property type="evidence" value="ECO:0007669"/>
    <property type="project" value="UniProtKB-UniRule"/>
</dbReference>
<dbReference type="Gene3D" id="1.10.520.20">
    <property type="entry name" value="N-terminal domain of the delta subunit of the F1F0-ATP synthase"/>
    <property type="match status" value="1"/>
</dbReference>
<dbReference type="HAMAP" id="MF_01416">
    <property type="entry name" value="ATP_synth_delta_bact"/>
    <property type="match status" value="1"/>
</dbReference>
<dbReference type="InterPro" id="IPR026015">
    <property type="entry name" value="ATP_synth_OSCP/delta_N_sf"/>
</dbReference>
<dbReference type="InterPro" id="IPR000711">
    <property type="entry name" value="ATPase_OSCP/dsu"/>
</dbReference>
<dbReference type="NCBIfam" id="TIGR01145">
    <property type="entry name" value="ATP_synt_delta"/>
    <property type="match status" value="1"/>
</dbReference>
<dbReference type="NCBIfam" id="NF004401">
    <property type="entry name" value="PRK05758.2-1"/>
    <property type="match status" value="1"/>
</dbReference>
<dbReference type="PANTHER" id="PTHR11910">
    <property type="entry name" value="ATP SYNTHASE DELTA CHAIN"/>
    <property type="match status" value="1"/>
</dbReference>
<dbReference type="Pfam" id="PF00213">
    <property type="entry name" value="OSCP"/>
    <property type="match status" value="1"/>
</dbReference>
<dbReference type="PRINTS" id="PR00125">
    <property type="entry name" value="ATPASEDELTA"/>
</dbReference>
<dbReference type="SUPFAM" id="SSF47928">
    <property type="entry name" value="N-terminal domain of the delta subunit of the F1F0-ATP synthase"/>
    <property type="match status" value="1"/>
</dbReference>
<gene>
    <name evidence="1" type="primary">atpH</name>
    <name type="ordered locus">SSA_0785</name>
</gene>
<reference key="1">
    <citation type="journal article" date="2007" name="J. Bacteriol.">
        <title>Genome of the opportunistic pathogen Streptococcus sanguinis.</title>
        <authorList>
            <person name="Xu P."/>
            <person name="Alves J.M."/>
            <person name="Kitten T."/>
            <person name="Brown A."/>
            <person name="Chen Z."/>
            <person name="Ozaki L.S."/>
            <person name="Manque P."/>
            <person name="Ge X."/>
            <person name="Serrano M.G."/>
            <person name="Puiu D."/>
            <person name="Hendricks S."/>
            <person name="Wang Y."/>
            <person name="Chaplin M.D."/>
            <person name="Akan D."/>
            <person name="Paik S."/>
            <person name="Peterson D.L."/>
            <person name="Macrina F.L."/>
            <person name="Buck G.A."/>
        </authorList>
    </citation>
    <scope>NUCLEOTIDE SEQUENCE [LARGE SCALE GENOMIC DNA]</scope>
    <source>
        <strain>SK36</strain>
    </source>
</reference>
<protein>
    <recommendedName>
        <fullName evidence="1">ATP synthase subunit delta</fullName>
    </recommendedName>
    <alternativeName>
        <fullName evidence="1">ATP synthase F(1) sector subunit delta</fullName>
    </alternativeName>
    <alternativeName>
        <fullName evidence="1">F-type ATPase subunit delta</fullName>
        <shortName evidence="1">F-ATPase subunit delta</shortName>
    </alternativeName>
</protein>
<organism>
    <name type="scientific">Streptococcus sanguinis (strain SK36)</name>
    <dbReference type="NCBI Taxonomy" id="388919"/>
    <lineage>
        <taxon>Bacteria</taxon>
        <taxon>Bacillati</taxon>
        <taxon>Bacillota</taxon>
        <taxon>Bacilli</taxon>
        <taxon>Lactobacillales</taxon>
        <taxon>Streptococcaceae</taxon>
        <taxon>Streptococcus</taxon>
    </lineage>
</organism>
<feature type="chain" id="PRO_1000184814" description="ATP synthase subunit delta">
    <location>
        <begin position="1"/>
        <end position="178"/>
    </location>
</feature>
<name>ATPD_STRSV</name>